<sequence length="130" mass="14812">MAENQYYGTGRRKSSAARVFIKPGNGNIVINQRSLEQYFGRETARMVVRQPLELVDMVEKLDLYITVKGGGISGQAGAIRHGITRALMEYDESLRGELRKAGFVTRDARQVERKKVGLRKARRRPQFSKR</sequence>
<gene>
    <name evidence="1" type="primary">rpsI</name>
    <name type="ordered locus">PC1_0293</name>
</gene>
<keyword id="KW-0687">Ribonucleoprotein</keyword>
<keyword id="KW-0689">Ribosomal protein</keyword>
<accession>C6DIQ2</accession>
<name>RS9_PECCP</name>
<evidence type="ECO:0000255" key="1">
    <source>
        <dbReference type="HAMAP-Rule" id="MF_00532"/>
    </source>
</evidence>
<evidence type="ECO:0000305" key="2"/>
<proteinExistence type="inferred from homology"/>
<feature type="chain" id="PRO_1000211840" description="Small ribosomal subunit protein uS9">
    <location>
        <begin position="1"/>
        <end position="130"/>
    </location>
</feature>
<protein>
    <recommendedName>
        <fullName evidence="1">Small ribosomal subunit protein uS9</fullName>
    </recommendedName>
    <alternativeName>
        <fullName evidence="2">30S ribosomal protein S9</fullName>
    </alternativeName>
</protein>
<dbReference type="EMBL" id="CP001657">
    <property type="protein sequence ID" value="ACT11352.1"/>
    <property type="molecule type" value="Genomic_DNA"/>
</dbReference>
<dbReference type="RefSeq" id="WP_012773012.1">
    <property type="nucleotide sequence ID" value="NC_012917.1"/>
</dbReference>
<dbReference type="SMR" id="C6DIQ2"/>
<dbReference type="STRING" id="561230.PC1_0293"/>
<dbReference type="GeneID" id="67795911"/>
<dbReference type="KEGG" id="pct:PC1_0293"/>
<dbReference type="eggNOG" id="COG0103">
    <property type="taxonomic scope" value="Bacteria"/>
</dbReference>
<dbReference type="HOGENOM" id="CLU_046483_2_1_6"/>
<dbReference type="OrthoDB" id="9803965at2"/>
<dbReference type="Proteomes" id="UP000002736">
    <property type="component" value="Chromosome"/>
</dbReference>
<dbReference type="GO" id="GO:0022627">
    <property type="term" value="C:cytosolic small ribosomal subunit"/>
    <property type="evidence" value="ECO:0007669"/>
    <property type="project" value="TreeGrafter"/>
</dbReference>
<dbReference type="GO" id="GO:0003723">
    <property type="term" value="F:RNA binding"/>
    <property type="evidence" value="ECO:0007669"/>
    <property type="project" value="TreeGrafter"/>
</dbReference>
<dbReference type="GO" id="GO:0003735">
    <property type="term" value="F:structural constituent of ribosome"/>
    <property type="evidence" value="ECO:0007669"/>
    <property type="project" value="InterPro"/>
</dbReference>
<dbReference type="GO" id="GO:0006412">
    <property type="term" value="P:translation"/>
    <property type="evidence" value="ECO:0007669"/>
    <property type="project" value="UniProtKB-UniRule"/>
</dbReference>
<dbReference type="FunFam" id="3.30.230.10:FF:000001">
    <property type="entry name" value="30S ribosomal protein S9"/>
    <property type="match status" value="1"/>
</dbReference>
<dbReference type="Gene3D" id="3.30.230.10">
    <property type="match status" value="1"/>
</dbReference>
<dbReference type="HAMAP" id="MF_00532_B">
    <property type="entry name" value="Ribosomal_uS9_B"/>
    <property type="match status" value="1"/>
</dbReference>
<dbReference type="InterPro" id="IPR020568">
    <property type="entry name" value="Ribosomal_Su5_D2-typ_SF"/>
</dbReference>
<dbReference type="InterPro" id="IPR000754">
    <property type="entry name" value="Ribosomal_uS9"/>
</dbReference>
<dbReference type="InterPro" id="IPR023035">
    <property type="entry name" value="Ribosomal_uS9_bac/plastid"/>
</dbReference>
<dbReference type="InterPro" id="IPR020574">
    <property type="entry name" value="Ribosomal_uS9_CS"/>
</dbReference>
<dbReference type="InterPro" id="IPR014721">
    <property type="entry name" value="Ribsml_uS5_D2-typ_fold_subgr"/>
</dbReference>
<dbReference type="NCBIfam" id="NF001099">
    <property type="entry name" value="PRK00132.1"/>
    <property type="match status" value="1"/>
</dbReference>
<dbReference type="PANTHER" id="PTHR21569">
    <property type="entry name" value="RIBOSOMAL PROTEIN S9"/>
    <property type="match status" value="1"/>
</dbReference>
<dbReference type="PANTHER" id="PTHR21569:SF1">
    <property type="entry name" value="SMALL RIBOSOMAL SUBUNIT PROTEIN US9M"/>
    <property type="match status" value="1"/>
</dbReference>
<dbReference type="Pfam" id="PF00380">
    <property type="entry name" value="Ribosomal_S9"/>
    <property type="match status" value="1"/>
</dbReference>
<dbReference type="SUPFAM" id="SSF54211">
    <property type="entry name" value="Ribosomal protein S5 domain 2-like"/>
    <property type="match status" value="1"/>
</dbReference>
<dbReference type="PROSITE" id="PS00360">
    <property type="entry name" value="RIBOSOMAL_S9"/>
    <property type="match status" value="1"/>
</dbReference>
<organism>
    <name type="scientific">Pectobacterium carotovorum subsp. carotovorum (strain PC1)</name>
    <dbReference type="NCBI Taxonomy" id="561230"/>
    <lineage>
        <taxon>Bacteria</taxon>
        <taxon>Pseudomonadati</taxon>
        <taxon>Pseudomonadota</taxon>
        <taxon>Gammaproteobacteria</taxon>
        <taxon>Enterobacterales</taxon>
        <taxon>Pectobacteriaceae</taxon>
        <taxon>Pectobacterium</taxon>
    </lineage>
</organism>
<reference key="1">
    <citation type="submission" date="2009-07" db="EMBL/GenBank/DDBJ databases">
        <title>Complete sequence of Pectobacterium carotovorum subsp. carotovorum PC1.</title>
        <authorList>
            <consortium name="US DOE Joint Genome Institute"/>
            <person name="Lucas S."/>
            <person name="Copeland A."/>
            <person name="Lapidus A."/>
            <person name="Glavina del Rio T."/>
            <person name="Tice H."/>
            <person name="Bruce D."/>
            <person name="Goodwin L."/>
            <person name="Pitluck S."/>
            <person name="Munk A.C."/>
            <person name="Brettin T."/>
            <person name="Detter J.C."/>
            <person name="Han C."/>
            <person name="Tapia R."/>
            <person name="Larimer F."/>
            <person name="Land M."/>
            <person name="Hauser L."/>
            <person name="Kyrpides N."/>
            <person name="Mikhailova N."/>
            <person name="Balakrishnan V."/>
            <person name="Glasner J."/>
            <person name="Perna N.T."/>
        </authorList>
    </citation>
    <scope>NUCLEOTIDE SEQUENCE [LARGE SCALE GENOMIC DNA]</scope>
    <source>
        <strain>PC1</strain>
    </source>
</reference>
<comment type="similarity">
    <text evidence="1">Belongs to the universal ribosomal protein uS9 family.</text>
</comment>